<keyword id="KW-0143">Chaperone</keyword>
<keyword id="KW-0963">Cytoplasm</keyword>
<gene>
    <name evidence="1" type="primary">pfdB</name>
    <name type="ordered locus">Mevan_1258</name>
</gene>
<name>PFDB_METVS</name>
<sequence length="113" mass="13500">MELPPNVQNQLMQFQQLQQQLQMIMYQKQQFETQLKEMEKAVEEMEKSTSDEVFKMAGGILVKRNKDEVKEELSEKMETMKLRVATFEKQEEKMQKRYAELQENLQKVIGQGH</sequence>
<protein>
    <recommendedName>
        <fullName evidence="1">Prefoldin subunit beta</fullName>
    </recommendedName>
    <alternativeName>
        <fullName evidence="1">GimC subunit beta</fullName>
    </alternativeName>
</protein>
<accession>A6URN3</accession>
<evidence type="ECO:0000255" key="1">
    <source>
        <dbReference type="HAMAP-Rule" id="MF_00307"/>
    </source>
</evidence>
<organism>
    <name type="scientific">Methanococcus vannielii (strain ATCC 35089 / DSM 1224 / JCM 13029 / OCM 148 / SB)</name>
    <dbReference type="NCBI Taxonomy" id="406327"/>
    <lineage>
        <taxon>Archaea</taxon>
        <taxon>Methanobacteriati</taxon>
        <taxon>Methanobacteriota</taxon>
        <taxon>Methanomada group</taxon>
        <taxon>Methanococci</taxon>
        <taxon>Methanococcales</taxon>
        <taxon>Methanococcaceae</taxon>
        <taxon>Methanococcus</taxon>
    </lineage>
</organism>
<comment type="function">
    <text evidence="1">Molecular chaperone capable of stabilizing a range of proteins. Seems to fulfill an ATP-independent, HSP70-like function in archaeal de novo protein folding.</text>
</comment>
<comment type="subunit">
    <text evidence="1">Heterohexamer of two alpha and four beta subunits.</text>
</comment>
<comment type="subcellular location">
    <subcellularLocation>
        <location evidence="1">Cytoplasm</location>
    </subcellularLocation>
</comment>
<comment type="similarity">
    <text evidence="1">Belongs to the prefoldin subunit beta family.</text>
</comment>
<dbReference type="EMBL" id="CP000742">
    <property type="protein sequence ID" value="ABR55155.1"/>
    <property type="molecule type" value="Genomic_DNA"/>
</dbReference>
<dbReference type="RefSeq" id="WP_012066070.1">
    <property type="nucleotide sequence ID" value="NC_009634.1"/>
</dbReference>
<dbReference type="SMR" id="A6URN3"/>
<dbReference type="STRING" id="406327.Mevan_1258"/>
<dbReference type="GeneID" id="5324565"/>
<dbReference type="KEGG" id="mvn:Mevan_1258"/>
<dbReference type="eggNOG" id="arCOG01342">
    <property type="taxonomic scope" value="Archaea"/>
</dbReference>
<dbReference type="HOGENOM" id="CLU_131909_0_1_2"/>
<dbReference type="OrthoDB" id="60701at2157"/>
<dbReference type="Proteomes" id="UP000001107">
    <property type="component" value="Chromosome"/>
</dbReference>
<dbReference type="GO" id="GO:0005737">
    <property type="term" value="C:cytoplasm"/>
    <property type="evidence" value="ECO:0007669"/>
    <property type="project" value="UniProtKB-SubCell"/>
</dbReference>
<dbReference type="GO" id="GO:0016272">
    <property type="term" value="C:prefoldin complex"/>
    <property type="evidence" value="ECO:0007669"/>
    <property type="project" value="UniProtKB-UniRule"/>
</dbReference>
<dbReference type="GO" id="GO:0051082">
    <property type="term" value="F:unfolded protein binding"/>
    <property type="evidence" value="ECO:0007669"/>
    <property type="project" value="UniProtKB-UniRule"/>
</dbReference>
<dbReference type="GO" id="GO:0006457">
    <property type="term" value="P:protein folding"/>
    <property type="evidence" value="ECO:0007669"/>
    <property type="project" value="UniProtKB-UniRule"/>
</dbReference>
<dbReference type="CDD" id="cd23162">
    <property type="entry name" value="Prefoldin_beta_GimC"/>
    <property type="match status" value="1"/>
</dbReference>
<dbReference type="Gene3D" id="1.10.287.370">
    <property type="match status" value="1"/>
</dbReference>
<dbReference type="HAMAP" id="MF_00307">
    <property type="entry name" value="PfdB"/>
    <property type="match status" value="1"/>
</dbReference>
<dbReference type="InterPro" id="IPR002777">
    <property type="entry name" value="PFD_beta-like"/>
</dbReference>
<dbReference type="InterPro" id="IPR012713">
    <property type="entry name" value="PfdB"/>
</dbReference>
<dbReference type="InterPro" id="IPR009053">
    <property type="entry name" value="Prefoldin"/>
</dbReference>
<dbReference type="NCBIfam" id="TIGR02338">
    <property type="entry name" value="gimC_beta"/>
    <property type="match status" value="1"/>
</dbReference>
<dbReference type="Pfam" id="PF01920">
    <property type="entry name" value="Prefoldin_2"/>
    <property type="match status" value="1"/>
</dbReference>
<dbReference type="SUPFAM" id="SSF46579">
    <property type="entry name" value="Prefoldin"/>
    <property type="match status" value="1"/>
</dbReference>
<reference key="1">
    <citation type="submission" date="2007-06" db="EMBL/GenBank/DDBJ databases">
        <title>Complete sequence of Methanococcus vannielii SB.</title>
        <authorList>
            <consortium name="US DOE Joint Genome Institute"/>
            <person name="Copeland A."/>
            <person name="Lucas S."/>
            <person name="Lapidus A."/>
            <person name="Barry K."/>
            <person name="Glavina del Rio T."/>
            <person name="Dalin E."/>
            <person name="Tice H."/>
            <person name="Pitluck S."/>
            <person name="Chain P."/>
            <person name="Malfatti S."/>
            <person name="Shin M."/>
            <person name="Vergez L."/>
            <person name="Schmutz J."/>
            <person name="Larimer F."/>
            <person name="Land M."/>
            <person name="Hauser L."/>
            <person name="Kyrpides N."/>
            <person name="Anderson I."/>
            <person name="Sieprawska-Lupa M."/>
            <person name="Whitman W.B."/>
            <person name="Richardson P."/>
        </authorList>
    </citation>
    <scope>NUCLEOTIDE SEQUENCE [LARGE SCALE GENOMIC DNA]</scope>
    <source>
        <strain>ATCC 35089 / DSM 1224 / JCM 13029 / OCM 148 / SB</strain>
    </source>
</reference>
<proteinExistence type="inferred from homology"/>
<feature type="chain" id="PRO_1000022796" description="Prefoldin subunit beta">
    <location>
        <begin position="1"/>
        <end position="113"/>
    </location>
</feature>